<accession>Q5LUA0</accession>
<evidence type="ECO:0000255" key="1">
    <source>
        <dbReference type="HAMAP-Rule" id="MF_01020"/>
    </source>
</evidence>
<proteinExistence type="inferred from homology"/>
<sequence length="105" mass="11167">MSILHDLAATIEARKGADPDSSWTAKLLAKGPEKCAEKFGEEAIEAIIEAVKGDRAKLVSEGADVLYHFLVMLAARDVALDDVLAELAHRQGQSGIAEKAARPKG</sequence>
<organism>
    <name type="scientific">Ruegeria pomeroyi (strain ATCC 700808 / DSM 15171 / DSS-3)</name>
    <name type="common">Silicibacter pomeroyi</name>
    <dbReference type="NCBI Taxonomy" id="246200"/>
    <lineage>
        <taxon>Bacteria</taxon>
        <taxon>Pseudomonadati</taxon>
        <taxon>Pseudomonadota</taxon>
        <taxon>Alphaproteobacteria</taxon>
        <taxon>Rhodobacterales</taxon>
        <taxon>Roseobacteraceae</taxon>
        <taxon>Ruegeria</taxon>
    </lineage>
</organism>
<gene>
    <name evidence="1" type="primary">hisE</name>
    <name type="ordered locus">SPO1155</name>
</gene>
<name>HIS2_RUEPO</name>
<feature type="chain" id="PRO_0000230191" description="Phosphoribosyl-ATP pyrophosphatase">
    <location>
        <begin position="1"/>
        <end position="105"/>
    </location>
</feature>
<dbReference type="EC" id="3.6.1.31" evidence="1"/>
<dbReference type="EMBL" id="CP000031">
    <property type="protein sequence ID" value="AAV94454.1"/>
    <property type="molecule type" value="Genomic_DNA"/>
</dbReference>
<dbReference type="RefSeq" id="WP_011046901.1">
    <property type="nucleotide sequence ID" value="NC_003911.12"/>
</dbReference>
<dbReference type="SMR" id="Q5LUA0"/>
<dbReference type="STRING" id="246200.SPO1155"/>
<dbReference type="PaxDb" id="246200-SPO1155"/>
<dbReference type="KEGG" id="sil:SPO1155"/>
<dbReference type="eggNOG" id="COG0140">
    <property type="taxonomic scope" value="Bacteria"/>
</dbReference>
<dbReference type="HOGENOM" id="CLU_123337_1_1_5"/>
<dbReference type="OrthoDB" id="9814738at2"/>
<dbReference type="UniPathway" id="UPA00031">
    <property type="reaction ID" value="UER00007"/>
</dbReference>
<dbReference type="Proteomes" id="UP000001023">
    <property type="component" value="Chromosome"/>
</dbReference>
<dbReference type="GO" id="GO:0005737">
    <property type="term" value="C:cytoplasm"/>
    <property type="evidence" value="ECO:0007669"/>
    <property type="project" value="UniProtKB-SubCell"/>
</dbReference>
<dbReference type="GO" id="GO:0005524">
    <property type="term" value="F:ATP binding"/>
    <property type="evidence" value="ECO:0007669"/>
    <property type="project" value="UniProtKB-KW"/>
</dbReference>
<dbReference type="GO" id="GO:0004636">
    <property type="term" value="F:phosphoribosyl-ATP diphosphatase activity"/>
    <property type="evidence" value="ECO:0007669"/>
    <property type="project" value="UniProtKB-UniRule"/>
</dbReference>
<dbReference type="GO" id="GO:0000105">
    <property type="term" value="P:L-histidine biosynthetic process"/>
    <property type="evidence" value="ECO:0007669"/>
    <property type="project" value="UniProtKB-UniRule"/>
</dbReference>
<dbReference type="CDD" id="cd11534">
    <property type="entry name" value="NTP-PPase_HisIE_like"/>
    <property type="match status" value="1"/>
</dbReference>
<dbReference type="Gene3D" id="1.10.287.1080">
    <property type="entry name" value="MazG-like"/>
    <property type="match status" value="1"/>
</dbReference>
<dbReference type="HAMAP" id="MF_01020">
    <property type="entry name" value="HisE"/>
    <property type="match status" value="1"/>
</dbReference>
<dbReference type="InterPro" id="IPR008179">
    <property type="entry name" value="HisE"/>
</dbReference>
<dbReference type="InterPro" id="IPR021130">
    <property type="entry name" value="PRib-ATP_PPHydrolase-like"/>
</dbReference>
<dbReference type="NCBIfam" id="TIGR03188">
    <property type="entry name" value="histidine_hisI"/>
    <property type="match status" value="1"/>
</dbReference>
<dbReference type="NCBIfam" id="NF001611">
    <property type="entry name" value="PRK00400.1-3"/>
    <property type="match status" value="1"/>
</dbReference>
<dbReference type="NCBIfam" id="NF001613">
    <property type="entry name" value="PRK00400.1-5"/>
    <property type="match status" value="1"/>
</dbReference>
<dbReference type="PANTHER" id="PTHR42945">
    <property type="entry name" value="HISTIDINE BIOSYNTHESIS BIFUNCTIONAL PROTEIN"/>
    <property type="match status" value="1"/>
</dbReference>
<dbReference type="PANTHER" id="PTHR42945:SF9">
    <property type="entry name" value="HISTIDINE BIOSYNTHESIS BIFUNCTIONAL PROTEIN HISIE"/>
    <property type="match status" value="1"/>
</dbReference>
<dbReference type="Pfam" id="PF01503">
    <property type="entry name" value="PRA-PH"/>
    <property type="match status" value="1"/>
</dbReference>
<dbReference type="SUPFAM" id="SSF101386">
    <property type="entry name" value="all-alpha NTP pyrophosphatases"/>
    <property type="match status" value="1"/>
</dbReference>
<reference key="1">
    <citation type="journal article" date="2004" name="Nature">
        <title>Genome sequence of Silicibacter pomeroyi reveals adaptations to the marine environment.</title>
        <authorList>
            <person name="Moran M.A."/>
            <person name="Buchan A."/>
            <person name="Gonzalez J.M."/>
            <person name="Heidelberg J.F."/>
            <person name="Whitman W.B."/>
            <person name="Kiene R.P."/>
            <person name="Henriksen J.R."/>
            <person name="King G.M."/>
            <person name="Belas R."/>
            <person name="Fuqua C."/>
            <person name="Brinkac L.M."/>
            <person name="Lewis M."/>
            <person name="Johri S."/>
            <person name="Weaver B."/>
            <person name="Pai G."/>
            <person name="Eisen J.A."/>
            <person name="Rahe E."/>
            <person name="Sheldon W.M."/>
            <person name="Ye W."/>
            <person name="Miller T.R."/>
            <person name="Carlton J."/>
            <person name="Rasko D.A."/>
            <person name="Paulsen I.T."/>
            <person name="Ren Q."/>
            <person name="Daugherty S.C."/>
            <person name="DeBoy R.T."/>
            <person name="Dodson R.J."/>
            <person name="Durkin A.S."/>
            <person name="Madupu R."/>
            <person name="Nelson W.C."/>
            <person name="Sullivan S.A."/>
            <person name="Rosovitz M.J."/>
            <person name="Haft D.H."/>
            <person name="Selengut J."/>
            <person name="Ward N."/>
        </authorList>
    </citation>
    <scope>NUCLEOTIDE SEQUENCE [LARGE SCALE GENOMIC DNA]</scope>
    <source>
        <strain>ATCC 700808 / DSM 15171 / DSS-3</strain>
    </source>
</reference>
<reference key="2">
    <citation type="journal article" date="2014" name="Stand. Genomic Sci.">
        <title>An updated genome annotation for the model marine bacterium Ruegeria pomeroyi DSS-3.</title>
        <authorList>
            <person name="Rivers A.R."/>
            <person name="Smith C.B."/>
            <person name="Moran M.A."/>
        </authorList>
    </citation>
    <scope>GENOME REANNOTATION</scope>
    <source>
        <strain>ATCC 700808 / DSM 15171 / DSS-3</strain>
    </source>
</reference>
<protein>
    <recommendedName>
        <fullName evidence="1">Phosphoribosyl-ATP pyrophosphatase</fullName>
        <shortName evidence="1">PRA-PH</shortName>
        <ecNumber evidence="1">3.6.1.31</ecNumber>
    </recommendedName>
</protein>
<comment type="catalytic activity">
    <reaction evidence="1">
        <text>1-(5-phospho-beta-D-ribosyl)-ATP + H2O = 1-(5-phospho-beta-D-ribosyl)-5'-AMP + diphosphate + H(+)</text>
        <dbReference type="Rhea" id="RHEA:22828"/>
        <dbReference type="ChEBI" id="CHEBI:15377"/>
        <dbReference type="ChEBI" id="CHEBI:15378"/>
        <dbReference type="ChEBI" id="CHEBI:33019"/>
        <dbReference type="ChEBI" id="CHEBI:59457"/>
        <dbReference type="ChEBI" id="CHEBI:73183"/>
        <dbReference type="EC" id="3.6.1.31"/>
    </reaction>
</comment>
<comment type="pathway">
    <text evidence="1">Amino-acid biosynthesis; L-histidine biosynthesis; L-histidine from 5-phospho-alpha-D-ribose 1-diphosphate: step 2/9.</text>
</comment>
<comment type="subcellular location">
    <subcellularLocation>
        <location evidence="1">Cytoplasm</location>
    </subcellularLocation>
</comment>
<comment type="similarity">
    <text evidence="1">Belongs to the PRA-PH family.</text>
</comment>
<keyword id="KW-0028">Amino-acid biosynthesis</keyword>
<keyword id="KW-0067">ATP-binding</keyword>
<keyword id="KW-0963">Cytoplasm</keyword>
<keyword id="KW-0368">Histidine biosynthesis</keyword>
<keyword id="KW-0378">Hydrolase</keyword>
<keyword id="KW-0547">Nucleotide-binding</keyword>
<keyword id="KW-1185">Reference proteome</keyword>